<organism>
    <name type="scientific">Sapajus apella</name>
    <name type="common">Brown-capped capuchin</name>
    <name type="synonym">Cebus apella</name>
    <dbReference type="NCBI Taxonomy" id="9515"/>
    <lineage>
        <taxon>Eukaryota</taxon>
        <taxon>Metazoa</taxon>
        <taxon>Chordata</taxon>
        <taxon>Craniata</taxon>
        <taxon>Vertebrata</taxon>
        <taxon>Euteleostomi</taxon>
        <taxon>Mammalia</taxon>
        <taxon>Eutheria</taxon>
        <taxon>Euarchontoglires</taxon>
        <taxon>Primates</taxon>
        <taxon>Haplorrhini</taxon>
        <taxon>Platyrrhini</taxon>
        <taxon>Cebidae</taxon>
        <taxon>Cebinae</taxon>
        <taxon>Sapajus</taxon>
    </lineage>
</organism>
<feature type="chain" id="PRO_0000066609" description="Glutathione peroxidase 1">
    <location>
        <begin position="1"/>
        <end position="201"/>
    </location>
</feature>
<feature type="active site" evidence="2">
    <location>
        <position position="47"/>
    </location>
</feature>
<feature type="site" description="Subject to oxidation and hydroselenide loss to dehydroalanine" evidence="1">
    <location>
        <position position="47"/>
    </location>
</feature>
<feature type="non-standard amino acid" description="Selenocysteine" evidence="5">
    <location>
        <position position="47"/>
    </location>
</feature>
<feature type="modified residue" description="Phosphoserine" evidence="3">
    <location>
        <position position="32"/>
    </location>
</feature>
<feature type="modified residue" description="N6-acetyllysine; alternate" evidence="5">
    <location>
        <position position="86"/>
    </location>
</feature>
<feature type="modified residue" description="N6-succinyllysine; alternate" evidence="5">
    <location>
        <position position="86"/>
    </location>
</feature>
<feature type="modified residue" description="N6-acetyllysine; alternate" evidence="5">
    <location>
        <position position="112"/>
    </location>
</feature>
<feature type="modified residue" description="N6-succinyllysine; alternate" evidence="5">
    <location>
        <position position="112"/>
    </location>
</feature>
<feature type="modified residue" description="N6-acetyllysine; alternate" evidence="5">
    <location>
        <position position="146"/>
    </location>
</feature>
<feature type="modified residue" description="N6-succinyllysine; alternate" evidence="5">
    <location>
        <position position="146"/>
    </location>
</feature>
<feature type="modified residue" description="Phosphoserine" evidence="3">
    <location>
        <position position="195"/>
    </location>
</feature>
<feature type="modified residue" description="Phosphoserine" evidence="4">
    <location>
        <position position="199"/>
    </location>
</feature>
<proteinExistence type="evidence at transcript level"/>
<protein>
    <recommendedName>
        <fullName evidence="6">Glutathione peroxidase 1</fullName>
        <shortName>GPx-1</shortName>
        <shortName>GSHPx-1</shortName>
        <ecNumber evidence="4">1.11.1.9</ecNumber>
    </recommendedName>
    <alternativeName>
        <fullName>Cellular glutathione peroxidase</fullName>
    </alternativeName>
    <alternativeName>
        <fullName>Phospholipid-hydroperoxide glutathione peroxidase GPX1</fullName>
        <ecNumber evidence="4">1.11.1.12</ecNumber>
    </alternativeName>
</protein>
<gene>
    <name type="primary">GPX1</name>
</gene>
<evidence type="ECO:0000250" key="1"/>
<evidence type="ECO:0000250" key="2">
    <source>
        <dbReference type="UniProtKB" id="O70325"/>
    </source>
</evidence>
<evidence type="ECO:0000250" key="3">
    <source>
        <dbReference type="UniProtKB" id="P04041"/>
    </source>
</evidence>
<evidence type="ECO:0000250" key="4">
    <source>
        <dbReference type="UniProtKB" id="P07203"/>
    </source>
</evidence>
<evidence type="ECO:0000250" key="5">
    <source>
        <dbReference type="UniProtKB" id="P11352"/>
    </source>
</evidence>
<evidence type="ECO:0000305" key="6"/>
<dbReference type="EC" id="1.11.1.9" evidence="4"/>
<dbReference type="EC" id="1.11.1.12" evidence="4"/>
<dbReference type="EMBL" id="AB120999">
    <property type="protein sequence ID" value="BAE17009.1"/>
    <property type="molecule type" value="mRNA"/>
</dbReference>
<dbReference type="PeroxiBase" id="3638">
    <property type="entry name" value="CapGPx01"/>
</dbReference>
<dbReference type="Proteomes" id="UP000504640">
    <property type="component" value="Unplaced"/>
</dbReference>
<dbReference type="GO" id="GO:0005829">
    <property type="term" value="C:cytosol"/>
    <property type="evidence" value="ECO:0000250"/>
    <property type="project" value="UniProtKB"/>
</dbReference>
<dbReference type="GO" id="GO:0005739">
    <property type="term" value="C:mitochondrion"/>
    <property type="evidence" value="ECO:0007669"/>
    <property type="project" value="UniProtKB-SubCell"/>
</dbReference>
<dbReference type="GO" id="GO:0004602">
    <property type="term" value="F:glutathione peroxidase activity"/>
    <property type="evidence" value="ECO:0000250"/>
    <property type="project" value="UniProtKB"/>
</dbReference>
<dbReference type="GO" id="GO:0047066">
    <property type="term" value="F:phospholipid-hydroperoxide glutathione peroxidase activity"/>
    <property type="evidence" value="ECO:0000250"/>
    <property type="project" value="UniProtKB"/>
</dbReference>
<dbReference type="GO" id="GO:0019369">
    <property type="term" value="P:arachidonate metabolic process"/>
    <property type="evidence" value="ECO:0000250"/>
    <property type="project" value="UniProtKB"/>
</dbReference>
<dbReference type="GO" id="GO:0006749">
    <property type="term" value="P:glutathione metabolic process"/>
    <property type="evidence" value="ECO:0007669"/>
    <property type="project" value="TreeGrafter"/>
</dbReference>
<dbReference type="GO" id="GO:0042744">
    <property type="term" value="P:hydrogen peroxide catabolic process"/>
    <property type="evidence" value="ECO:0007669"/>
    <property type="project" value="TreeGrafter"/>
</dbReference>
<dbReference type="GO" id="GO:0019372">
    <property type="term" value="P:lipoxygenase pathway"/>
    <property type="evidence" value="ECO:0000250"/>
    <property type="project" value="UniProtKB"/>
</dbReference>
<dbReference type="GO" id="GO:0042542">
    <property type="term" value="P:response to hydrogen peroxide"/>
    <property type="evidence" value="ECO:0007669"/>
    <property type="project" value="TreeGrafter"/>
</dbReference>
<dbReference type="GO" id="GO:0010269">
    <property type="term" value="P:response to selenium ion"/>
    <property type="evidence" value="ECO:0007669"/>
    <property type="project" value="TreeGrafter"/>
</dbReference>
<dbReference type="CDD" id="cd00340">
    <property type="entry name" value="GSH_Peroxidase"/>
    <property type="match status" value="1"/>
</dbReference>
<dbReference type="FunFam" id="3.40.30.10:FF:000153">
    <property type="entry name" value="Glutathione peroxidase"/>
    <property type="match status" value="1"/>
</dbReference>
<dbReference type="Gene3D" id="3.40.30.10">
    <property type="entry name" value="Glutaredoxin"/>
    <property type="match status" value="1"/>
</dbReference>
<dbReference type="InterPro" id="IPR000889">
    <property type="entry name" value="Glutathione_peroxidase"/>
</dbReference>
<dbReference type="InterPro" id="IPR029759">
    <property type="entry name" value="GPX_AS"/>
</dbReference>
<dbReference type="InterPro" id="IPR036249">
    <property type="entry name" value="Thioredoxin-like_sf"/>
</dbReference>
<dbReference type="PANTHER" id="PTHR11592">
    <property type="entry name" value="GLUTATHIONE PEROXIDASE"/>
    <property type="match status" value="1"/>
</dbReference>
<dbReference type="PANTHER" id="PTHR11592:SF41">
    <property type="entry name" value="GLUTATHIONE PEROXIDASE 1"/>
    <property type="match status" value="1"/>
</dbReference>
<dbReference type="Pfam" id="PF00255">
    <property type="entry name" value="GSHPx"/>
    <property type="match status" value="1"/>
</dbReference>
<dbReference type="PIRSF" id="PIRSF000303">
    <property type="entry name" value="Glutathion_perox"/>
    <property type="match status" value="1"/>
</dbReference>
<dbReference type="PRINTS" id="PR01011">
    <property type="entry name" value="GLUTPROXDASE"/>
</dbReference>
<dbReference type="SUPFAM" id="SSF52833">
    <property type="entry name" value="Thioredoxin-like"/>
    <property type="match status" value="1"/>
</dbReference>
<dbReference type="PROSITE" id="PS00460">
    <property type="entry name" value="GLUTATHIONE_PEROXID_1"/>
    <property type="match status" value="1"/>
</dbReference>
<dbReference type="PROSITE" id="PS51355">
    <property type="entry name" value="GLUTATHIONE_PEROXID_3"/>
    <property type="match status" value="1"/>
</dbReference>
<name>GPX1_SAPAP</name>
<keyword id="KW-0007">Acetylation</keyword>
<keyword id="KW-0963">Cytoplasm</keyword>
<keyword id="KW-0443">Lipid metabolism</keyword>
<keyword id="KW-0496">Mitochondrion</keyword>
<keyword id="KW-0560">Oxidoreductase</keyword>
<keyword id="KW-0575">Peroxidase</keyword>
<keyword id="KW-0597">Phosphoprotein</keyword>
<keyword id="KW-1185">Reference proteome</keyword>
<keyword id="KW-0712">Selenocysteine</keyword>
<reference key="1">
    <citation type="journal article" date="2005" name="Comp. Biochem. Physiol.">
        <title>Structure, gene expression, and evolution of primate glutathione peroxidases.</title>
        <authorList>
            <person name="Fukuhara R."/>
            <person name="Kageyama T."/>
        </authorList>
    </citation>
    <scope>NUCLEOTIDE SEQUENCE [MRNA]</scope>
</reference>
<sequence>MCAAGLAAAAAQSVYAFSARQLAGGEPVSLGSLRCKGLLIENVASLUGTTVRDYTQMNEPQRRLGPRGLVVLGFPCNHSGHQENAKNEEILNSLKYVRPGGGFEPNFMLFEKGEVNGAGAHTLFAFLREALPAPSDDATALMIDPKLITWSPVCRNDVAWNFEKFLVGPDGVPLRRYSRRFQTIDIEPDIEALLSQGPSCA</sequence>
<comment type="function">
    <text evidence="5">Catalyzes the reduction of hydroperoxides in a glutathione-dependent manner thus regulating cellular redox homeostasis. Can reduce small soluble hydroperoxides such as H2O2, cumene hydroperoxide and tert-butyl hydroperoxide, as well as several fatty acid-derived hydroperoxides. In platelets catalyzes the reduction of 12-hydroperoxyeicosatetraenoic acid, the primary product of the arachidonate 12-lipoxygenase pathway.</text>
</comment>
<comment type="catalytic activity">
    <reaction evidence="5">
        <text>2 glutathione + H2O2 = glutathione disulfide + 2 H2O</text>
        <dbReference type="Rhea" id="RHEA:16833"/>
        <dbReference type="ChEBI" id="CHEBI:15377"/>
        <dbReference type="ChEBI" id="CHEBI:16240"/>
        <dbReference type="ChEBI" id="CHEBI:57925"/>
        <dbReference type="ChEBI" id="CHEBI:58297"/>
        <dbReference type="EC" id="1.11.1.9"/>
    </reaction>
    <physiologicalReaction direction="left-to-right" evidence="5">
        <dbReference type="Rhea" id="RHEA:16834"/>
    </physiologicalReaction>
</comment>
<comment type="catalytic activity">
    <reaction evidence="4">
        <text>a hydroperoxy polyunsaturated fatty acid + 2 glutathione = a hydroxy polyunsaturated fatty acid + glutathione disulfide + H2O</text>
        <dbReference type="Rhea" id="RHEA:19057"/>
        <dbReference type="ChEBI" id="CHEBI:15377"/>
        <dbReference type="ChEBI" id="CHEBI:57925"/>
        <dbReference type="ChEBI" id="CHEBI:58297"/>
        <dbReference type="ChEBI" id="CHEBI:131871"/>
        <dbReference type="ChEBI" id="CHEBI:134019"/>
        <dbReference type="EC" id="1.11.1.12"/>
    </reaction>
    <physiologicalReaction direction="left-to-right" evidence="4">
        <dbReference type="Rhea" id="RHEA:19058"/>
    </physiologicalReaction>
</comment>
<comment type="catalytic activity">
    <reaction evidence="4">
        <text>tert-butyl hydroperoxide + 2 glutathione = tert-butanol + glutathione disulfide + H2O</text>
        <dbReference type="Rhea" id="RHEA:69412"/>
        <dbReference type="ChEBI" id="CHEBI:15377"/>
        <dbReference type="ChEBI" id="CHEBI:45895"/>
        <dbReference type="ChEBI" id="CHEBI:57925"/>
        <dbReference type="ChEBI" id="CHEBI:58297"/>
        <dbReference type="ChEBI" id="CHEBI:64090"/>
    </reaction>
    <physiologicalReaction direction="left-to-right" evidence="4">
        <dbReference type="Rhea" id="RHEA:69413"/>
    </physiologicalReaction>
</comment>
<comment type="catalytic activity">
    <reaction evidence="4">
        <text>cumene hydroperoxide + 2 glutathione = 2-phenylpropan-2-ol + glutathione disulfide + H2O</text>
        <dbReference type="Rhea" id="RHEA:69651"/>
        <dbReference type="ChEBI" id="CHEBI:15377"/>
        <dbReference type="ChEBI" id="CHEBI:57925"/>
        <dbReference type="ChEBI" id="CHEBI:58297"/>
        <dbReference type="ChEBI" id="CHEBI:78673"/>
        <dbReference type="ChEBI" id="CHEBI:131607"/>
    </reaction>
    <physiologicalReaction direction="left-to-right" evidence="4">
        <dbReference type="Rhea" id="RHEA:69652"/>
    </physiologicalReaction>
</comment>
<comment type="catalytic activity">
    <reaction evidence="4">
        <text>(13S)-hydroperoxy-(9Z,11E)-octadecadienoate + 2 glutathione = (13S)-hydroxy-(9Z,11E)-octadecadienoate + glutathione disulfide + H2O</text>
        <dbReference type="Rhea" id="RHEA:48888"/>
        <dbReference type="ChEBI" id="CHEBI:15377"/>
        <dbReference type="ChEBI" id="CHEBI:57466"/>
        <dbReference type="ChEBI" id="CHEBI:57925"/>
        <dbReference type="ChEBI" id="CHEBI:58297"/>
        <dbReference type="ChEBI" id="CHEBI:90850"/>
    </reaction>
    <physiologicalReaction direction="left-to-right" evidence="4">
        <dbReference type="Rhea" id="RHEA:48889"/>
    </physiologicalReaction>
</comment>
<comment type="catalytic activity">
    <reaction evidence="4">
        <text>(9S)-hydroperoxy-(10E,12Z)-octadecadienoate + 2 glutathione = (9S)-hydroxy-(10E,12Z)-octadecadienoate + glutathione disulfide + H2O</text>
        <dbReference type="Rhea" id="RHEA:76687"/>
        <dbReference type="ChEBI" id="CHEBI:15377"/>
        <dbReference type="ChEBI" id="CHEBI:57925"/>
        <dbReference type="ChEBI" id="CHEBI:58297"/>
        <dbReference type="ChEBI" id="CHEBI:60955"/>
        <dbReference type="ChEBI" id="CHEBI:77852"/>
    </reaction>
    <physiologicalReaction direction="left-to-right" evidence="4">
        <dbReference type="Rhea" id="RHEA:76688"/>
    </physiologicalReaction>
</comment>
<comment type="catalytic activity">
    <reaction evidence="4">
        <text>(5S)-hydroperoxy-(6E,8Z,11Z,14Z)-eicosatetraenoate + 2 glutathione = (5S)-hydroxy-(6E,8Z,11Z,14Z)-eicosatetraenoate + glutathione disulfide + H2O</text>
        <dbReference type="Rhea" id="RHEA:48620"/>
        <dbReference type="ChEBI" id="CHEBI:15377"/>
        <dbReference type="ChEBI" id="CHEBI:57450"/>
        <dbReference type="ChEBI" id="CHEBI:57925"/>
        <dbReference type="ChEBI" id="CHEBI:58297"/>
        <dbReference type="ChEBI" id="CHEBI:90632"/>
    </reaction>
    <physiologicalReaction direction="left-to-right" evidence="4">
        <dbReference type="Rhea" id="RHEA:48621"/>
    </physiologicalReaction>
</comment>
<comment type="catalytic activity">
    <reaction evidence="5">
        <text>(12S)-hydroperoxy-(5Z,8Z,10E,14Z)-eicosatetraenoate + 2 glutathione = (12S)-hydroxy-(5Z,8Z,10E,14Z)-eicosatetraenoate + glutathione disulfide + H2O</text>
        <dbReference type="Rhea" id="RHEA:50708"/>
        <dbReference type="ChEBI" id="CHEBI:15377"/>
        <dbReference type="ChEBI" id="CHEBI:57444"/>
        <dbReference type="ChEBI" id="CHEBI:57925"/>
        <dbReference type="ChEBI" id="CHEBI:58297"/>
        <dbReference type="ChEBI" id="CHEBI:90680"/>
    </reaction>
    <physiologicalReaction direction="left-to-right" evidence="5">
        <dbReference type="Rhea" id="RHEA:50709"/>
    </physiologicalReaction>
</comment>
<comment type="catalytic activity">
    <reaction evidence="4">
        <text>(12R)-hydroperoxy-(5Z,8Z,10E,14Z)-eicosatetraenoate + 2 glutathione = (12R)-hydroxy-(5Z,8Z,10E,14Z)-eicosatetraenoate + glutathione disulfide + H2O</text>
        <dbReference type="Rhea" id="RHEA:76691"/>
        <dbReference type="ChEBI" id="CHEBI:15377"/>
        <dbReference type="ChEBI" id="CHEBI:57925"/>
        <dbReference type="ChEBI" id="CHEBI:58297"/>
        <dbReference type="ChEBI" id="CHEBI:75230"/>
        <dbReference type="ChEBI" id="CHEBI:83343"/>
    </reaction>
    <physiologicalReaction direction="left-to-right" evidence="4">
        <dbReference type="Rhea" id="RHEA:76692"/>
    </physiologicalReaction>
</comment>
<comment type="catalytic activity">
    <reaction evidence="4">
        <text>(15S)-hydroperoxy-(5Z,8Z,11Z,13E)-eicosatetraenoate + 2 glutathione = (15S)-hydroxy-(5Z,8Z,11Z,13E)-eicosatetraenoate + glutathione disulfide + H2O</text>
        <dbReference type="Rhea" id="RHEA:76695"/>
        <dbReference type="ChEBI" id="CHEBI:15377"/>
        <dbReference type="ChEBI" id="CHEBI:57409"/>
        <dbReference type="ChEBI" id="CHEBI:57446"/>
        <dbReference type="ChEBI" id="CHEBI:57925"/>
        <dbReference type="ChEBI" id="CHEBI:58297"/>
    </reaction>
    <physiologicalReaction direction="left-to-right" evidence="4">
        <dbReference type="Rhea" id="RHEA:76696"/>
    </physiologicalReaction>
</comment>
<comment type="catalytic activity">
    <reaction evidence="4">
        <text>(5S)-hydroperoxy-(6E,8Z,11Z,14Z,17Z)-eicosapentaenoate + 2 glutathione = (5S)-hydroxy-(6E,8Z,11Z,14Z,17Z)-eicosapentaenoate + glutathione disulfide + H2O</text>
        <dbReference type="Rhea" id="RHEA:76699"/>
        <dbReference type="ChEBI" id="CHEBI:15377"/>
        <dbReference type="ChEBI" id="CHEBI:57925"/>
        <dbReference type="ChEBI" id="CHEBI:58297"/>
        <dbReference type="ChEBI" id="CHEBI:195399"/>
        <dbReference type="ChEBI" id="CHEBI:195400"/>
    </reaction>
    <physiologicalReaction direction="left-to-right" evidence="4">
        <dbReference type="Rhea" id="RHEA:76700"/>
    </physiologicalReaction>
</comment>
<comment type="catalytic activity">
    <reaction evidence="4">
        <text>(12S)-hydroperoxy-(5Z,8Z,10E,14Z,17Z)-eicosapentaenoate + 2 glutathione = (12S)-hydroxy-(5Z,8Z,10E,14Z,17Z)-eicosapentaenoate + glutathione disulfide + H2O</text>
        <dbReference type="Rhea" id="RHEA:76703"/>
        <dbReference type="ChEBI" id="CHEBI:15377"/>
        <dbReference type="ChEBI" id="CHEBI:57925"/>
        <dbReference type="ChEBI" id="CHEBI:58297"/>
        <dbReference type="ChEBI" id="CHEBI:90772"/>
        <dbReference type="ChEBI" id="CHEBI:195401"/>
    </reaction>
    <physiologicalReaction direction="left-to-right" evidence="4">
        <dbReference type="Rhea" id="RHEA:76704"/>
    </physiologicalReaction>
</comment>
<comment type="catalytic activity">
    <reaction evidence="4">
        <text>(15S)-hydroperoxy-(5Z,8Z,11Z,13E,17Z)-eicosapentaenoate + 2 glutathione = (15S)-hydroxy-(5Z,8Z,11Z,13E,17Z)-eicosapentaenoate + glutathione disulfide + H2O</text>
        <dbReference type="Rhea" id="RHEA:76707"/>
        <dbReference type="ChEBI" id="CHEBI:15377"/>
        <dbReference type="ChEBI" id="CHEBI:57925"/>
        <dbReference type="ChEBI" id="CHEBI:58297"/>
        <dbReference type="ChEBI" id="CHEBI:132087"/>
        <dbReference type="ChEBI" id="CHEBI:194369"/>
    </reaction>
    <physiologicalReaction direction="left-to-right" evidence="4">
        <dbReference type="Rhea" id="RHEA:76708"/>
    </physiologicalReaction>
</comment>
<comment type="catalytic activity">
    <reaction evidence="4">
        <text>(15S)-hydroperoxy-(11Z,13E)-eicosadienoate + 2 glutathione = (15S)-hydroxy-(11Z,13E)-eicosadienoate + glutathione disulfide + H2O</text>
        <dbReference type="Rhea" id="RHEA:76711"/>
        <dbReference type="ChEBI" id="CHEBI:15377"/>
        <dbReference type="ChEBI" id="CHEBI:57925"/>
        <dbReference type="ChEBI" id="CHEBI:58297"/>
        <dbReference type="ChEBI" id="CHEBI:144832"/>
        <dbReference type="ChEBI" id="CHEBI:195402"/>
    </reaction>
    <physiologicalReaction direction="left-to-right" evidence="4">
        <dbReference type="Rhea" id="RHEA:76712"/>
    </physiologicalReaction>
</comment>
<comment type="catalytic activity">
    <reaction evidence="4">
        <text>(17S)-hydroperoxy-(4Z,7Z,10Z,13Z,15E,19Z)-docosahexaenoate + 2 glutathione = (17S)-hydroxy-(4Z,7Z,10Z,13Z,15E,19Z)-docosahexaenoate + glutathione disulfide + H2O</text>
        <dbReference type="Rhea" id="RHEA:76715"/>
        <dbReference type="ChEBI" id="CHEBI:15377"/>
        <dbReference type="ChEBI" id="CHEBI:57925"/>
        <dbReference type="ChEBI" id="CHEBI:58297"/>
        <dbReference type="ChEBI" id="CHEBI:133795"/>
        <dbReference type="ChEBI" id="CHEBI:195403"/>
    </reaction>
    <physiologicalReaction direction="left-to-right" evidence="4">
        <dbReference type="Rhea" id="RHEA:76716"/>
    </physiologicalReaction>
</comment>
<comment type="subunit">
    <text evidence="5">Homotetramer. Interacts with MIEN1 (By similarity).</text>
</comment>
<comment type="subcellular location">
    <subcellularLocation>
        <location evidence="5">Cytoplasm</location>
    </subcellularLocation>
    <subcellularLocation>
        <location evidence="5">Mitochondrion</location>
    </subcellularLocation>
</comment>
<comment type="PTM">
    <text evidence="5">During periods of oxidative stress, Sec-47 may react with a superoxide radical, irreversibly lose hydroselenide and be converted to dehydroalanine.</text>
</comment>
<comment type="similarity">
    <text evidence="6">Belongs to the glutathione peroxidase family.</text>
</comment>
<accession>Q4AEI1</accession>